<feature type="chain" id="PRO_1000050350" description="Phosphoribosylformylglycinamidine synthase subunit PurL">
    <location>
        <begin position="1"/>
        <end position="729"/>
    </location>
</feature>
<feature type="active site" evidence="1">
    <location>
        <position position="54"/>
    </location>
</feature>
<feature type="active site" description="Proton acceptor" evidence="1">
    <location>
        <position position="100"/>
    </location>
</feature>
<feature type="binding site" evidence="1">
    <location>
        <position position="57"/>
    </location>
    <ligand>
        <name>ATP</name>
        <dbReference type="ChEBI" id="CHEBI:30616"/>
    </ligand>
</feature>
<feature type="binding site" evidence="1">
    <location>
        <position position="96"/>
    </location>
    <ligand>
        <name>ATP</name>
        <dbReference type="ChEBI" id="CHEBI:30616"/>
    </ligand>
</feature>
<feature type="binding site" evidence="1">
    <location>
        <position position="98"/>
    </location>
    <ligand>
        <name>Mg(2+)</name>
        <dbReference type="ChEBI" id="CHEBI:18420"/>
        <label>1</label>
    </ligand>
</feature>
<feature type="binding site" evidence="1">
    <location>
        <begin position="99"/>
        <end position="102"/>
    </location>
    <ligand>
        <name>substrate</name>
    </ligand>
</feature>
<feature type="binding site" evidence="1">
    <location>
        <position position="121"/>
    </location>
    <ligand>
        <name>substrate</name>
    </ligand>
</feature>
<feature type="binding site" evidence="1">
    <location>
        <position position="122"/>
    </location>
    <ligand>
        <name>Mg(2+)</name>
        <dbReference type="ChEBI" id="CHEBI:18420"/>
        <label>2</label>
    </ligand>
</feature>
<feature type="binding site" evidence="1">
    <location>
        <position position="245"/>
    </location>
    <ligand>
        <name>substrate</name>
    </ligand>
</feature>
<feature type="binding site" evidence="1">
    <location>
        <position position="273"/>
    </location>
    <ligand>
        <name>Mg(2+)</name>
        <dbReference type="ChEBI" id="CHEBI:18420"/>
        <label>2</label>
    </ligand>
</feature>
<feature type="binding site" evidence="1">
    <location>
        <begin position="317"/>
        <end position="319"/>
    </location>
    <ligand>
        <name>substrate</name>
    </ligand>
</feature>
<feature type="binding site" evidence="1">
    <location>
        <position position="495"/>
    </location>
    <ligand>
        <name>ATP</name>
        <dbReference type="ChEBI" id="CHEBI:30616"/>
    </ligand>
</feature>
<feature type="binding site" evidence="1">
    <location>
        <position position="532"/>
    </location>
    <ligand>
        <name>ATP</name>
        <dbReference type="ChEBI" id="CHEBI:30616"/>
    </ligand>
</feature>
<feature type="binding site" evidence="1">
    <location>
        <position position="533"/>
    </location>
    <ligand>
        <name>Mg(2+)</name>
        <dbReference type="ChEBI" id="CHEBI:18420"/>
        <label>1</label>
    </ligand>
</feature>
<feature type="binding site" evidence="1">
    <location>
        <position position="535"/>
    </location>
    <ligand>
        <name>substrate</name>
    </ligand>
</feature>
<evidence type="ECO:0000255" key="1">
    <source>
        <dbReference type="HAMAP-Rule" id="MF_00420"/>
    </source>
</evidence>
<comment type="function">
    <text evidence="1">Part of the phosphoribosylformylglycinamidine synthase complex involved in the purines biosynthetic pathway. Catalyzes the ATP-dependent conversion of formylglycinamide ribonucleotide (FGAR) and glutamine to yield formylglycinamidine ribonucleotide (FGAM) and glutamate. The FGAM synthase complex is composed of three subunits. PurQ produces an ammonia molecule by converting glutamine to glutamate. PurL transfers the ammonia molecule to FGAR to form FGAM in an ATP-dependent manner. PurS interacts with PurQ and PurL and is thought to assist in the transfer of the ammonia molecule from PurQ to PurL.</text>
</comment>
<comment type="catalytic activity">
    <reaction evidence="1">
        <text>N(2)-formyl-N(1)-(5-phospho-beta-D-ribosyl)glycinamide + L-glutamine + ATP + H2O = 2-formamido-N(1)-(5-O-phospho-beta-D-ribosyl)acetamidine + L-glutamate + ADP + phosphate + H(+)</text>
        <dbReference type="Rhea" id="RHEA:17129"/>
        <dbReference type="ChEBI" id="CHEBI:15377"/>
        <dbReference type="ChEBI" id="CHEBI:15378"/>
        <dbReference type="ChEBI" id="CHEBI:29985"/>
        <dbReference type="ChEBI" id="CHEBI:30616"/>
        <dbReference type="ChEBI" id="CHEBI:43474"/>
        <dbReference type="ChEBI" id="CHEBI:58359"/>
        <dbReference type="ChEBI" id="CHEBI:147286"/>
        <dbReference type="ChEBI" id="CHEBI:147287"/>
        <dbReference type="ChEBI" id="CHEBI:456216"/>
        <dbReference type="EC" id="6.3.5.3"/>
    </reaction>
</comment>
<comment type="pathway">
    <text evidence="1">Purine metabolism; IMP biosynthesis via de novo pathway; 5-amino-1-(5-phospho-D-ribosyl)imidazole from N(2)-formyl-N(1)-(5-phospho-D-ribosyl)glycinamide: step 1/2.</text>
</comment>
<comment type="subunit">
    <text evidence="1">Monomer. Part of the FGAM synthase complex composed of 1 PurL, 1 PurQ and 2 PurS subunits.</text>
</comment>
<comment type="subcellular location">
    <subcellularLocation>
        <location evidence="1">Cytoplasm</location>
    </subcellularLocation>
</comment>
<comment type="similarity">
    <text evidence="1">Belongs to the FGAMS family.</text>
</comment>
<organism>
    <name type="scientific">Staphylococcus aureus (strain Mu3 / ATCC 700698)</name>
    <dbReference type="NCBI Taxonomy" id="418127"/>
    <lineage>
        <taxon>Bacteria</taxon>
        <taxon>Bacillati</taxon>
        <taxon>Bacillota</taxon>
        <taxon>Bacilli</taxon>
        <taxon>Bacillales</taxon>
        <taxon>Staphylococcaceae</taxon>
        <taxon>Staphylococcus</taxon>
    </lineage>
</organism>
<protein>
    <recommendedName>
        <fullName evidence="1">Phosphoribosylformylglycinamidine synthase subunit PurL</fullName>
        <shortName evidence="1">FGAM synthase</shortName>
        <ecNumber evidence="1">6.3.5.3</ecNumber>
    </recommendedName>
    <alternativeName>
        <fullName evidence="1">Formylglycinamide ribonucleotide amidotransferase subunit II</fullName>
        <shortName evidence="1">FGAR amidotransferase II</shortName>
        <shortName evidence="1">FGAR-AT II</shortName>
    </alternativeName>
    <alternativeName>
        <fullName evidence="1">Glutamine amidotransferase PurL</fullName>
    </alternativeName>
    <alternativeName>
        <fullName evidence="1">Phosphoribosylformylglycinamidine synthase subunit II</fullName>
    </alternativeName>
</protein>
<gene>
    <name evidence="1" type="primary">purL</name>
    <name type="ordered locus">SAHV_1061</name>
</gene>
<accession>A7X0W1</accession>
<keyword id="KW-0067">ATP-binding</keyword>
<keyword id="KW-0963">Cytoplasm</keyword>
<keyword id="KW-0436">Ligase</keyword>
<keyword id="KW-0460">Magnesium</keyword>
<keyword id="KW-0479">Metal-binding</keyword>
<keyword id="KW-0547">Nucleotide-binding</keyword>
<keyword id="KW-0658">Purine biosynthesis</keyword>
<sequence>MSKFIEPSVEEIKLEKVYQDMGLSDQEYEKVCDILGRQPNFTETGIFSVMWSEHCSYKHSKPFLKQFPTSGEHVLMGPGEGAGVVDIGDNQAVVFKVESHNHPSAIEPYQGAATGVGGIIRDIVSIGARPINLLNSLRFGELDNKQNQRLLKGVVKGIGGYGNCIGIPTTAGEIEFDERYDGNPLVNAMCVGVINHDMIQKGTAKGVGNSVIYVGLKTGRDGIHGATFASEELTEESESKRPSVQIGDPFVGKKLMEATLEAITFDELVGIQDMGAAGLTSSSSEMAAKGGSGLHLRLEQVPTREPGISPYEMMLSETQERMLLVVEKGNEQKFLDLFDKHELDSAVIGEVTDTNRFVLTYDDEVYADIPVEPLADEAPVYILEGEEKDYNTSKNDYTHIDVKDTFFKLLKHPTIASKHYLYDQYDQQVGANTIIKPGLQASVVRVEGTNKAIASTIDGEARYVYNNPYEGGKMVVAEAYRNLIAVGATPLAMTDCLNYGSPEKKEIYQQLIDSTKGMAEACDILKTPVVSGNVSLYNETKGTSIFPTPVVGMVGLIENVNYLNDFEPQVGDKLYLIGDTKDDFGGSQLEKLIYGKVNHEFESLDLSSEVEKGESIKTAIREGLLSHVQTVGKGGLLITLAKLSAHYGLGLKSSIDITNAQLFSETQGRYVVSVKSGKTLNIDNAIEIGLLTDSDNFKVTTPYTEISENVSDIKQIWEGAIAQCLTTQD</sequence>
<proteinExistence type="inferred from homology"/>
<name>PURL_STAA1</name>
<reference key="1">
    <citation type="journal article" date="2008" name="Antimicrob. Agents Chemother.">
        <title>Mutated response regulator graR is responsible for phenotypic conversion of Staphylococcus aureus from heterogeneous vancomycin-intermediate resistance to vancomycin-intermediate resistance.</title>
        <authorList>
            <person name="Neoh H.-M."/>
            <person name="Cui L."/>
            <person name="Yuzawa H."/>
            <person name="Takeuchi F."/>
            <person name="Matsuo M."/>
            <person name="Hiramatsu K."/>
        </authorList>
    </citation>
    <scope>NUCLEOTIDE SEQUENCE [LARGE SCALE GENOMIC DNA]</scope>
    <source>
        <strain>Mu3 / ATCC 700698</strain>
    </source>
</reference>
<dbReference type="EC" id="6.3.5.3" evidence="1"/>
<dbReference type="EMBL" id="AP009324">
    <property type="protein sequence ID" value="BAF77944.1"/>
    <property type="molecule type" value="Genomic_DNA"/>
</dbReference>
<dbReference type="RefSeq" id="WP_000032740.1">
    <property type="nucleotide sequence ID" value="NC_009782.1"/>
</dbReference>
<dbReference type="SMR" id="A7X0W1"/>
<dbReference type="KEGG" id="saw:SAHV_1061"/>
<dbReference type="HOGENOM" id="CLU_003100_0_1_9"/>
<dbReference type="UniPathway" id="UPA00074">
    <property type="reaction ID" value="UER00128"/>
</dbReference>
<dbReference type="GO" id="GO:0005737">
    <property type="term" value="C:cytoplasm"/>
    <property type="evidence" value="ECO:0007669"/>
    <property type="project" value="UniProtKB-SubCell"/>
</dbReference>
<dbReference type="GO" id="GO:0005524">
    <property type="term" value="F:ATP binding"/>
    <property type="evidence" value="ECO:0007669"/>
    <property type="project" value="UniProtKB-UniRule"/>
</dbReference>
<dbReference type="GO" id="GO:0000287">
    <property type="term" value="F:magnesium ion binding"/>
    <property type="evidence" value="ECO:0007669"/>
    <property type="project" value="UniProtKB-UniRule"/>
</dbReference>
<dbReference type="GO" id="GO:0004642">
    <property type="term" value="F:phosphoribosylformylglycinamidine synthase activity"/>
    <property type="evidence" value="ECO:0007669"/>
    <property type="project" value="UniProtKB-UniRule"/>
</dbReference>
<dbReference type="GO" id="GO:0006189">
    <property type="term" value="P:'de novo' IMP biosynthetic process"/>
    <property type="evidence" value="ECO:0007669"/>
    <property type="project" value="UniProtKB-UniRule"/>
</dbReference>
<dbReference type="CDD" id="cd02203">
    <property type="entry name" value="PurL_repeat1"/>
    <property type="match status" value="1"/>
</dbReference>
<dbReference type="CDD" id="cd02204">
    <property type="entry name" value="PurL_repeat2"/>
    <property type="match status" value="1"/>
</dbReference>
<dbReference type="FunFam" id="3.30.1330.10:FF:000004">
    <property type="entry name" value="Phosphoribosylformylglycinamidine synthase subunit PurL"/>
    <property type="match status" value="1"/>
</dbReference>
<dbReference type="Gene3D" id="3.90.650.10">
    <property type="entry name" value="PurM-like C-terminal domain"/>
    <property type="match status" value="2"/>
</dbReference>
<dbReference type="Gene3D" id="3.30.1330.10">
    <property type="entry name" value="PurM-like, N-terminal domain"/>
    <property type="match status" value="2"/>
</dbReference>
<dbReference type="HAMAP" id="MF_00420">
    <property type="entry name" value="PurL_2"/>
    <property type="match status" value="1"/>
</dbReference>
<dbReference type="InterPro" id="IPR010074">
    <property type="entry name" value="PRibForGlyAmidine_synth_PurL"/>
</dbReference>
<dbReference type="InterPro" id="IPR041609">
    <property type="entry name" value="PurL_linker"/>
</dbReference>
<dbReference type="InterPro" id="IPR010918">
    <property type="entry name" value="PurM-like_C_dom"/>
</dbReference>
<dbReference type="InterPro" id="IPR036676">
    <property type="entry name" value="PurM-like_C_sf"/>
</dbReference>
<dbReference type="InterPro" id="IPR016188">
    <property type="entry name" value="PurM-like_N"/>
</dbReference>
<dbReference type="InterPro" id="IPR036921">
    <property type="entry name" value="PurM-like_N_sf"/>
</dbReference>
<dbReference type="NCBIfam" id="TIGR01736">
    <property type="entry name" value="FGAM_synth_II"/>
    <property type="match status" value="1"/>
</dbReference>
<dbReference type="NCBIfam" id="NF002290">
    <property type="entry name" value="PRK01213.1"/>
    <property type="match status" value="1"/>
</dbReference>
<dbReference type="PANTHER" id="PTHR43555">
    <property type="entry name" value="PHOSPHORIBOSYLFORMYLGLYCINAMIDINE SYNTHASE SUBUNIT PURL"/>
    <property type="match status" value="1"/>
</dbReference>
<dbReference type="PANTHER" id="PTHR43555:SF1">
    <property type="entry name" value="PHOSPHORIBOSYLFORMYLGLYCINAMIDINE SYNTHASE SUBUNIT PURL"/>
    <property type="match status" value="1"/>
</dbReference>
<dbReference type="Pfam" id="PF00586">
    <property type="entry name" value="AIRS"/>
    <property type="match status" value="2"/>
</dbReference>
<dbReference type="Pfam" id="PF02769">
    <property type="entry name" value="AIRS_C"/>
    <property type="match status" value="1"/>
</dbReference>
<dbReference type="Pfam" id="PF18072">
    <property type="entry name" value="FGAR-AT_linker"/>
    <property type="match status" value="1"/>
</dbReference>
<dbReference type="PIRSF" id="PIRSF001587">
    <property type="entry name" value="FGAM_synthase_II"/>
    <property type="match status" value="1"/>
</dbReference>
<dbReference type="SUPFAM" id="SSF56042">
    <property type="entry name" value="PurM C-terminal domain-like"/>
    <property type="match status" value="2"/>
</dbReference>
<dbReference type="SUPFAM" id="SSF55326">
    <property type="entry name" value="PurM N-terminal domain-like"/>
    <property type="match status" value="2"/>
</dbReference>